<comment type="function">
    <text evidence="2">Cell wall formation.</text>
</comment>
<comment type="catalytic activity">
    <reaction evidence="2">
        <text>2 D-alanine + ATP = D-alanyl-D-alanine + ADP + phosphate + H(+)</text>
        <dbReference type="Rhea" id="RHEA:11224"/>
        <dbReference type="ChEBI" id="CHEBI:15378"/>
        <dbReference type="ChEBI" id="CHEBI:30616"/>
        <dbReference type="ChEBI" id="CHEBI:43474"/>
        <dbReference type="ChEBI" id="CHEBI:57416"/>
        <dbReference type="ChEBI" id="CHEBI:57822"/>
        <dbReference type="ChEBI" id="CHEBI:456216"/>
        <dbReference type="EC" id="6.3.2.4"/>
    </reaction>
</comment>
<comment type="cofactor">
    <cofactor evidence="1">
        <name>Mg(2+)</name>
        <dbReference type="ChEBI" id="CHEBI:18420"/>
    </cofactor>
    <cofactor evidence="1">
        <name>Mn(2+)</name>
        <dbReference type="ChEBI" id="CHEBI:29035"/>
    </cofactor>
    <text evidence="1">Binds 2 magnesium or manganese ions per subunit.</text>
</comment>
<comment type="pathway">
    <text evidence="2">Cell wall biogenesis; peptidoglycan biosynthesis.</text>
</comment>
<comment type="subcellular location">
    <subcellularLocation>
        <location evidence="2">Cytoplasm</location>
    </subcellularLocation>
</comment>
<comment type="similarity">
    <text evidence="2">Belongs to the D-alanine--D-alanine ligase family.</text>
</comment>
<accession>B4E6J0</accession>
<dbReference type="EC" id="6.3.2.4" evidence="2"/>
<dbReference type="EMBL" id="AM747720">
    <property type="protein sequence ID" value="CAR53783.1"/>
    <property type="molecule type" value="Genomic_DNA"/>
</dbReference>
<dbReference type="RefSeq" id="WP_006487105.1">
    <property type="nucleotide sequence ID" value="NC_011000.1"/>
</dbReference>
<dbReference type="SMR" id="B4E6J0"/>
<dbReference type="KEGG" id="bcj:BCAL3460"/>
<dbReference type="eggNOG" id="COG1181">
    <property type="taxonomic scope" value="Bacteria"/>
</dbReference>
<dbReference type="HOGENOM" id="CLU_039268_1_2_4"/>
<dbReference type="BioCyc" id="BCEN216591:G1G1V-3848-MONOMER"/>
<dbReference type="UniPathway" id="UPA00219"/>
<dbReference type="Proteomes" id="UP000001035">
    <property type="component" value="Chromosome 1"/>
</dbReference>
<dbReference type="GO" id="GO:0005829">
    <property type="term" value="C:cytosol"/>
    <property type="evidence" value="ECO:0007669"/>
    <property type="project" value="TreeGrafter"/>
</dbReference>
<dbReference type="GO" id="GO:0005524">
    <property type="term" value="F:ATP binding"/>
    <property type="evidence" value="ECO:0007669"/>
    <property type="project" value="UniProtKB-KW"/>
</dbReference>
<dbReference type="GO" id="GO:0008716">
    <property type="term" value="F:D-alanine-D-alanine ligase activity"/>
    <property type="evidence" value="ECO:0007669"/>
    <property type="project" value="UniProtKB-UniRule"/>
</dbReference>
<dbReference type="GO" id="GO:0046872">
    <property type="term" value="F:metal ion binding"/>
    <property type="evidence" value="ECO:0007669"/>
    <property type="project" value="UniProtKB-KW"/>
</dbReference>
<dbReference type="GO" id="GO:0071555">
    <property type="term" value="P:cell wall organization"/>
    <property type="evidence" value="ECO:0007669"/>
    <property type="project" value="UniProtKB-KW"/>
</dbReference>
<dbReference type="GO" id="GO:0009252">
    <property type="term" value="P:peptidoglycan biosynthetic process"/>
    <property type="evidence" value="ECO:0007669"/>
    <property type="project" value="UniProtKB-UniRule"/>
</dbReference>
<dbReference type="GO" id="GO:0008360">
    <property type="term" value="P:regulation of cell shape"/>
    <property type="evidence" value="ECO:0007669"/>
    <property type="project" value="UniProtKB-KW"/>
</dbReference>
<dbReference type="FunFam" id="3.30.1490.20:FF:000007">
    <property type="entry name" value="D-alanine--D-alanine ligase"/>
    <property type="match status" value="1"/>
</dbReference>
<dbReference type="FunFam" id="3.30.470.20:FF:000008">
    <property type="entry name" value="D-alanine--D-alanine ligase"/>
    <property type="match status" value="1"/>
</dbReference>
<dbReference type="FunFam" id="3.40.50.20:FF:000013">
    <property type="entry name" value="D-alanine--D-alanine ligase"/>
    <property type="match status" value="1"/>
</dbReference>
<dbReference type="Gene3D" id="3.40.50.20">
    <property type="match status" value="1"/>
</dbReference>
<dbReference type="Gene3D" id="3.30.1490.20">
    <property type="entry name" value="ATP-grasp fold, A domain"/>
    <property type="match status" value="1"/>
</dbReference>
<dbReference type="Gene3D" id="3.30.470.20">
    <property type="entry name" value="ATP-grasp fold, B domain"/>
    <property type="match status" value="1"/>
</dbReference>
<dbReference type="HAMAP" id="MF_00047">
    <property type="entry name" value="Dala_Dala_lig"/>
    <property type="match status" value="1"/>
</dbReference>
<dbReference type="InterPro" id="IPR011761">
    <property type="entry name" value="ATP-grasp"/>
</dbReference>
<dbReference type="InterPro" id="IPR013815">
    <property type="entry name" value="ATP_grasp_subdomain_1"/>
</dbReference>
<dbReference type="InterPro" id="IPR000291">
    <property type="entry name" value="D-Ala_lig_Van_CS"/>
</dbReference>
<dbReference type="InterPro" id="IPR005905">
    <property type="entry name" value="D_ala_D_ala"/>
</dbReference>
<dbReference type="InterPro" id="IPR011095">
    <property type="entry name" value="Dala_Dala_lig_C"/>
</dbReference>
<dbReference type="InterPro" id="IPR011127">
    <property type="entry name" value="Dala_Dala_lig_N"/>
</dbReference>
<dbReference type="InterPro" id="IPR016185">
    <property type="entry name" value="PreATP-grasp_dom_sf"/>
</dbReference>
<dbReference type="NCBIfam" id="TIGR01205">
    <property type="entry name" value="D_ala_D_alaTIGR"/>
    <property type="match status" value="1"/>
</dbReference>
<dbReference type="NCBIfam" id="NF002378">
    <property type="entry name" value="PRK01372.1"/>
    <property type="match status" value="1"/>
</dbReference>
<dbReference type="PANTHER" id="PTHR23132">
    <property type="entry name" value="D-ALANINE--D-ALANINE LIGASE"/>
    <property type="match status" value="1"/>
</dbReference>
<dbReference type="PANTHER" id="PTHR23132:SF23">
    <property type="entry name" value="D-ALANINE--D-ALANINE LIGASE B"/>
    <property type="match status" value="1"/>
</dbReference>
<dbReference type="Pfam" id="PF07478">
    <property type="entry name" value="Dala_Dala_lig_C"/>
    <property type="match status" value="1"/>
</dbReference>
<dbReference type="Pfam" id="PF01820">
    <property type="entry name" value="Dala_Dala_lig_N"/>
    <property type="match status" value="1"/>
</dbReference>
<dbReference type="PIRSF" id="PIRSF039102">
    <property type="entry name" value="Ddl/VanB"/>
    <property type="match status" value="1"/>
</dbReference>
<dbReference type="SUPFAM" id="SSF56059">
    <property type="entry name" value="Glutathione synthetase ATP-binding domain-like"/>
    <property type="match status" value="1"/>
</dbReference>
<dbReference type="SUPFAM" id="SSF52440">
    <property type="entry name" value="PreATP-grasp domain"/>
    <property type="match status" value="1"/>
</dbReference>
<dbReference type="PROSITE" id="PS50975">
    <property type="entry name" value="ATP_GRASP"/>
    <property type="match status" value="1"/>
</dbReference>
<dbReference type="PROSITE" id="PS00843">
    <property type="entry name" value="DALA_DALA_LIGASE_1"/>
    <property type="match status" value="1"/>
</dbReference>
<dbReference type="PROSITE" id="PS00844">
    <property type="entry name" value="DALA_DALA_LIGASE_2"/>
    <property type="match status" value="1"/>
</dbReference>
<proteinExistence type="inferred from homology"/>
<reference key="1">
    <citation type="journal article" date="2009" name="J. Bacteriol.">
        <title>The genome of Burkholderia cenocepacia J2315, an epidemic pathogen of cystic fibrosis patients.</title>
        <authorList>
            <person name="Holden M.T."/>
            <person name="Seth-Smith H.M."/>
            <person name="Crossman L.C."/>
            <person name="Sebaihia M."/>
            <person name="Bentley S.D."/>
            <person name="Cerdeno-Tarraga A.M."/>
            <person name="Thomson N.R."/>
            <person name="Bason N."/>
            <person name="Quail M.A."/>
            <person name="Sharp S."/>
            <person name="Cherevach I."/>
            <person name="Churcher C."/>
            <person name="Goodhead I."/>
            <person name="Hauser H."/>
            <person name="Holroyd N."/>
            <person name="Mungall K."/>
            <person name="Scott P."/>
            <person name="Walker D."/>
            <person name="White B."/>
            <person name="Rose H."/>
            <person name="Iversen P."/>
            <person name="Mil-Homens D."/>
            <person name="Rocha E.P."/>
            <person name="Fialho A.M."/>
            <person name="Baldwin A."/>
            <person name="Dowson C."/>
            <person name="Barrell B.G."/>
            <person name="Govan J.R."/>
            <person name="Vandamme P."/>
            <person name="Hart C.A."/>
            <person name="Mahenthiralingam E."/>
            <person name="Parkhill J."/>
        </authorList>
    </citation>
    <scope>NUCLEOTIDE SEQUENCE [LARGE SCALE GENOMIC DNA]</scope>
    <source>
        <strain>ATCC BAA-245 / DSM 16553 / LMG 16656 / NCTC 13227 / J2315 / CF5610</strain>
    </source>
</reference>
<protein>
    <recommendedName>
        <fullName evidence="2">D-alanine--D-alanine ligase</fullName>
        <ecNumber evidence="2">6.3.2.4</ecNumber>
    </recommendedName>
    <alternativeName>
        <fullName evidence="2">D-Ala-D-Ala ligase</fullName>
    </alternativeName>
    <alternativeName>
        <fullName evidence="2">D-alanylalanine synthetase</fullName>
    </alternativeName>
</protein>
<organism>
    <name type="scientific">Burkholderia cenocepacia (strain ATCC BAA-245 / DSM 16553 / LMG 16656 / NCTC 13227 / J2315 / CF5610)</name>
    <name type="common">Burkholderia cepacia (strain J2315)</name>
    <dbReference type="NCBI Taxonomy" id="216591"/>
    <lineage>
        <taxon>Bacteria</taxon>
        <taxon>Pseudomonadati</taxon>
        <taxon>Pseudomonadota</taxon>
        <taxon>Betaproteobacteria</taxon>
        <taxon>Burkholderiales</taxon>
        <taxon>Burkholderiaceae</taxon>
        <taxon>Burkholderia</taxon>
        <taxon>Burkholderia cepacia complex</taxon>
    </lineage>
</organism>
<gene>
    <name evidence="2" type="primary">ddl</name>
    <name type="ordered locus">BceJ2315_33980</name>
    <name type="ORF">BCAL3460</name>
</gene>
<evidence type="ECO:0000250" key="1"/>
<evidence type="ECO:0000255" key="2">
    <source>
        <dbReference type="HAMAP-Rule" id="MF_00047"/>
    </source>
</evidence>
<sequence length="313" mass="33341">MSGIDPKRFGKVAVLFGGESAEREVSLTSGRLVLQGLRDAGVDAHPFDPAERPLSALKDEGFVRAFNALHGGYGENGQIQGALDFYGIRYTGSGVLGSALGLDKFRTKLVWQQTGVPTPPFETVMRGDDLAARATDIVAKLGLPLFVKPASEGSSVAVLKVKTADALPAALEEAATHDKIVIVEKSIEGGGEYTACIAGDLDLPLIKIVPAGEFYDYHAKYVADDTQYLIPCGLPAQQEAELKRIARRAFDVLGCTDWGRADFMLDAAGNAYFLEVNTAPGMTDHSLPPKAARAVGISYSELVVKVLSLTLND</sequence>
<name>DDL_BURCJ</name>
<keyword id="KW-0067">ATP-binding</keyword>
<keyword id="KW-0133">Cell shape</keyword>
<keyword id="KW-0961">Cell wall biogenesis/degradation</keyword>
<keyword id="KW-0963">Cytoplasm</keyword>
<keyword id="KW-0436">Ligase</keyword>
<keyword id="KW-0460">Magnesium</keyword>
<keyword id="KW-0464">Manganese</keyword>
<keyword id="KW-0479">Metal-binding</keyword>
<keyword id="KW-0547">Nucleotide-binding</keyword>
<keyword id="KW-0573">Peptidoglycan synthesis</keyword>
<feature type="chain" id="PRO_1000091165" description="D-alanine--D-alanine ligase">
    <location>
        <begin position="1"/>
        <end position="313"/>
    </location>
</feature>
<feature type="domain" description="ATP-grasp" evidence="2">
    <location>
        <begin position="108"/>
        <end position="308"/>
    </location>
</feature>
<feature type="binding site" evidence="2">
    <location>
        <begin position="138"/>
        <end position="193"/>
    </location>
    <ligand>
        <name>ATP</name>
        <dbReference type="ChEBI" id="CHEBI:30616"/>
    </ligand>
</feature>
<feature type="binding site" evidence="2">
    <location>
        <position position="262"/>
    </location>
    <ligand>
        <name>Mg(2+)</name>
        <dbReference type="ChEBI" id="CHEBI:18420"/>
        <label>1</label>
    </ligand>
</feature>
<feature type="binding site" evidence="2">
    <location>
        <position position="275"/>
    </location>
    <ligand>
        <name>Mg(2+)</name>
        <dbReference type="ChEBI" id="CHEBI:18420"/>
        <label>1</label>
    </ligand>
</feature>
<feature type="binding site" evidence="2">
    <location>
        <position position="275"/>
    </location>
    <ligand>
        <name>Mg(2+)</name>
        <dbReference type="ChEBI" id="CHEBI:18420"/>
        <label>2</label>
    </ligand>
</feature>
<feature type="binding site" evidence="2">
    <location>
        <position position="277"/>
    </location>
    <ligand>
        <name>Mg(2+)</name>
        <dbReference type="ChEBI" id="CHEBI:18420"/>
        <label>2</label>
    </ligand>
</feature>